<comment type="function">
    <text>Plant non-specific lipid-transfer proteins transfer phospholipids as well as galactolipids across membranes. May play a role in wax or cutin deposition in the cell walls of expanding epidermal cells and certain secretory tissues.</text>
</comment>
<comment type="induction">
    <text>By cold.</text>
</comment>
<comment type="similarity">
    <text evidence="3">Belongs to the plant LTP family.</text>
</comment>
<keyword id="KW-1015">Disulfide bond</keyword>
<keyword id="KW-0446">Lipid-binding</keyword>
<keyword id="KW-0732">Signal</keyword>
<keyword id="KW-0346">Stress response</keyword>
<keyword id="KW-0813">Transport</keyword>
<gene>
    <name type="primary">LTP4.2</name>
    <name type="synonym">BLT4.9</name>
</gene>
<accession>Q43875</accession>
<dbReference type="EMBL" id="U63993">
    <property type="protein sequence ID" value="AAB05812.1"/>
    <property type="molecule type" value="Genomic_DNA"/>
</dbReference>
<dbReference type="EMBL" id="Z66529">
    <property type="protein sequence ID" value="CAA91436.1"/>
    <property type="molecule type" value="Genomic_DNA"/>
</dbReference>
<dbReference type="SMR" id="Q43875"/>
<dbReference type="GO" id="GO:0008289">
    <property type="term" value="F:lipid binding"/>
    <property type="evidence" value="ECO:0007669"/>
    <property type="project" value="UniProtKB-KW"/>
</dbReference>
<dbReference type="GO" id="GO:0006869">
    <property type="term" value="P:lipid transport"/>
    <property type="evidence" value="ECO:0007669"/>
    <property type="project" value="InterPro"/>
</dbReference>
<dbReference type="CDD" id="cd01960">
    <property type="entry name" value="nsLTP1"/>
    <property type="match status" value="1"/>
</dbReference>
<dbReference type="Gene3D" id="1.10.110.10">
    <property type="entry name" value="Plant lipid-transfer and hydrophobic proteins"/>
    <property type="match status" value="1"/>
</dbReference>
<dbReference type="InterPro" id="IPR036312">
    <property type="entry name" value="Bifun_inhib/LTP/seed_sf"/>
</dbReference>
<dbReference type="InterPro" id="IPR016140">
    <property type="entry name" value="Bifunc_inhib/LTP/seed_store"/>
</dbReference>
<dbReference type="InterPro" id="IPR000528">
    <property type="entry name" value="Plant_nsLTP"/>
</dbReference>
<dbReference type="PANTHER" id="PTHR33076">
    <property type="entry name" value="NON-SPECIFIC LIPID-TRANSFER PROTEIN 2-RELATED"/>
    <property type="match status" value="1"/>
</dbReference>
<dbReference type="Pfam" id="PF00234">
    <property type="entry name" value="Tryp_alpha_amyl"/>
    <property type="match status" value="1"/>
</dbReference>
<dbReference type="PRINTS" id="PR00382">
    <property type="entry name" value="LIPIDTRNSFER"/>
</dbReference>
<dbReference type="SMART" id="SM00499">
    <property type="entry name" value="AAI"/>
    <property type="match status" value="1"/>
</dbReference>
<dbReference type="SUPFAM" id="SSF47699">
    <property type="entry name" value="Bifunctional inhibitor/lipid-transfer protein/seed storage 2S albumin"/>
    <property type="match status" value="1"/>
</dbReference>
<dbReference type="PROSITE" id="PS00597">
    <property type="entry name" value="PLANT_LTP"/>
    <property type="match status" value="1"/>
</dbReference>
<feature type="signal peptide" evidence="2">
    <location>
        <begin position="1"/>
        <end position="25"/>
    </location>
</feature>
<feature type="chain" id="PRO_0000018384" description="Non-specific lipid-transfer protein 4.2">
    <location>
        <begin position="26"/>
        <end position="115"/>
    </location>
</feature>
<feature type="disulfide bond" evidence="1">
    <location>
        <begin position="29"/>
        <end position="77"/>
    </location>
</feature>
<feature type="disulfide bond" evidence="1">
    <location>
        <begin position="39"/>
        <end position="54"/>
    </location>
</feature>
<feature type="disulfide bond" evidence="1">
    <location>
        <begin position="55"/>
        <end position="97"/>
    </location>
</feature>
<feature type="disulfide bond" evidence="1">
    <location>
        <begin position="75"/>
        <end position="111"/>
    </location>
</feature>
<proteinExistence type="evidence at transcript level"/>
<reference key="1">
    <citation type="journal article" date="1994" name="J. Exp. Bot.">
        <title>Comparative analysis of genomic sequence and expression of a lipid transfer protein gene family in winter barley.</title>
        <authorList>
            <person name="White A.J."/>
            <person name="Dunn M.A."/>
            <person name="Brown K."/>
            <person name="Hughes M.A."/>
        </authorList>
    </citation>
    <scope>NUCLEOTIDE SEQUENCE [GENOMIC DNA]</scope>
    <source>
        <strain>cv. Igri</strain>
    </source>
</reference>
<reference key="2">
    <citation type="journal article" date="1996" name="Mol. Gen. Genet.">
        <title>Two cold-inducible genes encoding lipid transfer protein LTP4 from barley show differential responses to bacterial pathogens.</title>
        <authorList>
            <person name="Molina A."/>
            <person name="Diaz I."/>
            <person name="Vasil I.K."/>
            <person name="Carbonero P."/>
            <person name="Garcia-Olmedo F."/>
        </authorList>
    </citation>
    <scope>NUCLEOTIDE SEQUENCE [GENOMIC DNA]</scope>
    <source>
        <strain>cv. NK 1558</strain>
        <tissue>Leaf</tissue>
    </source>
</reference>
<name>NLT42_HORVU</name>
<evidence type="ECO:0000250" key="1"/>
<evidence type="ECO:0000255" key="2"/>
<evidence type="ECO:0000305" key="3"/>
<organism>
    <name type="scientific">Hordeum vulgare</name>
    <name type="common">Barley</name>
    <dbReference type="NCBI Taxonomy" id="4513"/>
    <lineage>
        <taxon>Eukaryota</taxon>
        <taxon>Viridiplantae</taxon>
        <taxon>Streptophyta</taxon>
        <taxon>Embryophyta</taxon>
        <taxon>Tracheophyta</taxon>
        <taxon>Spermatophyta</taxon>
        <taxon>Magnoliopsida</taxon>
        <taxon>Liliopsida</taxon>
        <taxon>Poales</taxon>
        <taxon>Poaceae</taxon>
        <taxon>BOP clade</taxon>
        <taxon>Pooideae</taxon>
        <taxon>Triticodae</taxon>
        <taxon>Triticeae</taxon>
        <taxon>Hordeinae</taxon>
        <taxon>Hordeum</taxon>
    </lineage>
</organism>
<sequence length="115" mass="11175">MARAAATQLVLVAMVAAMLIVATDAAISCGQVSSALSPCISYARGNGAKPPVACCSGVKRLAGAAQSTADKQAACKCIKSAAGGLNAGKAAGIPSMCGVSVPYAISASVDCSKIR</sequence>
<protein>
    <recommendedName>
        <fullName>Non-specific lipid-transfer protein 4.2</fullName>
        <shortName>LTP 4.2</shortName>
    </recommendedName>
    <alternativeName>
        <fullName>Low-temperature-responsive protein 4.9</fullName>
    </alternativeName>
</protein>